<sequence>MNYDFSRELRLLTPEDYKFVFKQAHRAGSPHFTILARENSLSHPRLGLAVPKKQIKTAVGRNKFKRIVRESFRNKQHSLPAKDFVVIAKKSAQELSNEDFNKLLDKLWHRLSRPSRG</sequence>
<proteinExistence type="inferred from homology"/>
<comment type="function">
    <text evidence="1">RNaseP catalyzes the removal of the 5'-leader sequence from pre-tRNA to produce the mature 5'-terminus. It can also cleave other RNA substrates such as 4.5S RNA. The protein component plays an auxiliary but essential role in vivo by binding to the 5'-leader sequence and broadening the substrate specificity of the ribozyme.</text>
</comment>
<comment type="catalytic activity">
    <reaction evidence="1">
        <text>Endonucleolytic cleavage of RNA, removing 5'-extranucleotides from tRNA precursor.</text>
        <dbReference type="EC" id="3.1.26.5"/>
    </reaction>
</comment>
<comment type="subunit">
    <text evidence="1">Consists of a catalytic RNA component (M1 or rnpB) and a protein subunit.</text>
</comment>
<comment type="similarity">
    <text evidence="1">Belongs to the RnpA family.</text>
</comment>
<accession>Q5E8Z7</accession>
<dbReference type="EC" id="3.1.26.5" evidence="1"/>
<dbReference type="EMBL" id="CP000020">
    <property type="protein sequence ID" value="AAW84499.1"/>
    <property type="molecule type" value="Genomic_DNA"/>
</dbReference>
<dbReference type="RefSeq" id="WP_011260895.1">
    <property type="nucleotide sequence ID" value="NZ_CAWLES010000001.1"/>
</dbReference>
<dbReference type="RefSeq" id="YP_203387.1">
    <property type="nucleotide sequence ID" value="NC_006840.2"/>
</dbReference>
<dbReference type="SMR" id="Q5E8Z7"/>
<dbReference type="STRING" id="312309.VF_0004"/>
<dbReference type="EnsemblBacteria" id="AAW84499">
    <property type="protein sequence ID" value="AAW84499"/>
    <property type="gene ID" value="VF_0004"/>
</dbReference>
<dbReference type="GeneID" id="54162633"/>
<dbReference type="KEGG" id="vfi:VF_0004"/>
<dbReference type="PATRIC" id="fig|312309.11.peg.5"/>
<dbReference type="eggNOG" id="COG0594">
    <property type="taxonomic scope" value="Bacteria"/>
</dbReference>
<dbReference type="HOGENOM" id="CLU_117179_11_0_6"/>
<dbReference type="OrthoDB" id="9796422at2"/>
<dbReference type="Proteomes" id="UP000000537">
    <property type="component" value="Chromosome I"/>
</dbReference>
<dbReference type="GO" id="GO:0030677">
    <property type="term" value="C:ribonuclease P complex"/>
    <property type="evidence" value="ECO:0007669"/>
    <property type="project" value="TreeGrafter"/>
</dbReference>
<dbReference type="GO" id="GO:0042781">
    <property type="term" value="F:3'-tRNA processing endoribonuclease activity"/>
    <property type="evidence" value="ECO:0007669"/>
    <property type="project" value="TreeGrafter"/>
</dbReference>
<dbReference type="GO" id="GO:0004526">
    <property type="term" value="F:ribonuclease P activity"/>
    <property type="evidence" value="ECO:0007669"/>
    <property type="project" value="UniProtKB-UniRule"/>
</dbReference>
<dbReference type="GO" id="GO:0000049">
    <property type="term" value="F:tRNA binding"/>
    <property type="evidence" value="ECO:0007669"/>
    <property type="project" value="UniProtKB-UniRule"/>
</dbReference>
<dbReference type="GO" id="GO:0001682">
    <property type="term" value="P:tRNA 5'-leader removal"/>
    <property type="evidence" value="ECO:0007669"/>
    <property type="project" value="UniProtKB-UniRule"/>
</dbReference>
<dbReference type="Gene3D" id="3.30.230.10">
    <property type="match status" value="1"/>
</dbReference>
<dbReference type="HAMAP" id="MF_00227">
    <property type="entry name" value="RNase_P"/>
    <property type="match status" value="1"/>
</dbReference>
<dbReference type="InterPro" id="IPR020568">
    <property type="entry name" value="Ribosomal_Su5_D2-typ_SF"/>
</dbReference>
<dbReference type="InterPro" id="IPR014721">
    <property type="entry name" value="Ribsml_uS5_D2-typ_fold_subgr"/>
</dbReference>
<dbReference type="InterPro" id="IPR000100">
    <property type="entry name" value="RNase_P"/>
</dbReference>
<dbReference type="InterPro" id="IPR020539">
    <property type="entry name" value="RNase_P_CS"/>
</dbReference>
<dbReference type="NCBIfam" id="TIGR00188">
    <property type="entry name" value="rnpA"/>
    <property type="match status" value="1"/>
</dbReference>
<dbReference type="PANTHER" id="PTHR33992">
    <property type="entry name" value="RIBONUCLEASE P PROTEIN COMPONENT"/>
    <property type="match status" value="1"/>
</dbReference>
<dbReference type="PANTHER" id="PTHR33992:SF1">
    <property type="entry name" value="RIBONUCLEASE P PROTEIN COMPONENT"/>
    <property type="match status" value="1"/>
</dbReference>
<dbReference type="Pfam" id="PF00825">
    <property type="entry name" value="Ribonuclease_P"/>
    <property type="match status" value="1"/>
</dbReference>
<dbReference type="SUPFAM" id="SSF54211">
    <property type="entry name" value="Ribosomal protein S5 domain 2-like"/>
    <property type="match status" value="1"/>
</dbReference>
<dbReference type="PROSITE" id="PS00648">
    <property type="entry name" value="RIBONUCLEASE_P"/>
    <property type="match status" value="1"/>
</dbReference>
<protein>
    <recommendedName>
        <fullName evidence="1">Ribonuclease P protein component</fullName>
        <shortName evidence="1">RNase P protein</shortName>
        <shortName evidence="1">RNaseP protein</shortName>
        <ecNumber evidence="1">3.1.26.5</ecNumber>
    </recommendedName>
    <alternativeName>
        <fullName evidence="1">Protein C5</fullName>
    </alternativeName>
</protein>
<feature type="chain" id="PRO_0000198563" description="Ribonuclease P protein component">
    <location>
        <begin position="1"/>
        <end position="117"/>
    </location>
</feature>
<name>RNPA_ALIF1</name>
<evidence type="ECO:0000255" key="1">
    <source>
        <dbReference type="HAMAP-Rule" id="MF_00227"/>
    </source>
</evidence>
<reference key="1">
    <citation type="journal article" date="2005" name="Proc. Natl. Acad. Sci. U.S.A.">
        <title>Complete genome sequence of Vibrio fischeri: a symbiotic bacterium with pathogenic congeners.</title>
        <authorList>
            <person name="Ruby E.G."/>
            <person name="Urbanowski M."/>
            <person name="Campbell J."/>
            <person name="Dunn A."/>
            <person name="Faini M."/>
            <person name="Gunsalus R."/>
            <person name="Lostroh P."/>
            <person name="Lupp C."/>
            <person name="McCann J."/>
            <person name="Millikan D."/>
            <person name="Schaefer A."/>
            <person name="Stabb E."/>
            <person name="Stevens A."/>
            <person name="Visick K."/>
            <person name="Whistler C."/>
            <person name="Greenberg E.P."/>
        </authorList>
    </citation>
    <scope>NUCLEOTIDE SEQUENCE [LARGE SCALE GENOMIC DNA]</scope>
    <source>
        <strain>ATCC 700601 / ES114</strain>
    </source>
</reference>
<gene>
    <name evidence="1" type="primary">rnpA</name>
    <name type="ordered locus">VF_0004</name>
</gene>
<organism>
    <name type="scientific">Aliivibrio fischeri (strain ATCC 700601 / ES114)</name>
    <name type="common">Vibrio fischeri</name>
    <dbReference type="NCBI Taxonomy" id="312309"/>
    <lineage>
        <taxon>Bacteria</taxon>
        <taxon>Pseudomonadati</taxon>
        <taxon>Pseudomonadota</taxon>
        <taxon>Gammaproteobacteria</taxon>
        <taxon>Vibrionales</taxon>
        <taxon>Vibrionaceae</taxon>
        <taxon>Aliivibrio</taxon>
    </lineage>
</organism>
<keyword id="KW-0255">Endonuclease</keyword>
<keyword id="KW-0378">Hydrolase</keyword>
<keyword id="KW-0540">Nuclease</keyword>
<keyword id="KW-1185">Reference proteome</keyword>
<keyword id="KW-0694">RNA-binding</keyword>
<keyword id="KW-0819">tRNA processing</keyword>